<gene>
    <name type="primary">rfbJ</name>
    <name type="ordered locus">SF2095</name>
    <name type="ordered locus">S2217</name>
</gene>
<accession>P37786</accession>
<proteinExistence type="inferred from homology"/>
<organism>
    <name type="scientific">Shigella flexneri</name>
    <dbReference type="NCBI Taxonomy" id="623"/>
    <lineage>
        <taxon>Bacteria</taxon>
        <taxon>Pseudomonadati</taxon>
        <taxon>Pseudomonadota</taxon>
        <taxon>Gammaproteobacteria</taxon>
        <taxon>Enterobacterales</taxon>
        <taxon>Enterobacteriaceae</taxon>
        <taxon>Shigella</taxon>
    </lineage>
</organism>
<comment type="pathway">
    <text>Bacterial outer membrane biogenesis; lipopolysaccharide biosynthesis.</text>
</comment>
<comment type="similarity">
    <text evidence="1">Belongs to the glycosyltransferase 2 family.</text>
</comment>
<comment type="sequence caution" evidence="1">
    <conflict type="frameshift">
        <sequence resource="EMBL-CDS" id="CAA50776"/>
    </conflict>
</comment>
<keyword id="KW-0328">Glycosyltransferase</keyword>
<keyword id="KW-0448">Lipopolysaccharide biosynthesis</keyword>
<keyword id="KW-1185">Reference proteome</keyword>
<keyword id="KW-0808">Transferase</keyword>
<reference key="1">
    <citation type="journal article" date="1994" name="J. Bacteriol.">
        <title>Characterization of the rfc region of Shigella flexneri.</title>
        <authorList>
            <person name="Morona R."/>
            <person name="Mavris M."/>
            <person name="Fallarino A."/>
            <person name="Manning P.A."/>
        </authorList>
    </citation>
    <scope>NUCLEOTIDE SEQUENCE [GENOMIC DNA]</scope>
    <source>
        <strain>PE577 / Serotype 2a</strain>
    </source>
</reference>
<reference key="2">
    <citation type="journal article" date="2002" name="Nucleic Acids Res.">
        <title>Genome sequence of Shigella flexneri 2a: insights into pathogenicity through comparison with genomes of Escherichia coli K12 and O157.</title>
        <authorList>
            <person name="Jin Q."/>
            <person name="Yuan Z."/>
            <person name="Xu J."/>
            <person name="Wang Y."/>
            <person name="Shen Y."/>
            <person name="Lu W."/>
            <person name="Wang J."/>
            <person name="Liu H."/>
            <person name="Yang J."/>
            <person name="Yang F."/>
            <person name="Zhang X."/>
            <person name="Zhang J."/>
            <person name="Yang G."/>
            <person name="Wu H."/>
            <person name="Qu D."/>
            <person name="Dong J."/>
            <person name="Sun L."/>
            <person name="Xue Y."/>
            <person name="Zhao A."/>
            <person name="Gao Y."/>
            <person name="Zhu J."/>
            <person name="Kan B."/>
            <person name="Ding K."/>
            <person name="Chen S."/>
            <person name="Cheng H."/>
            <person name="Yao Z."/>
            <person name="He B."/>
            <person name="Chen R."/>
            <person name="Ma D."/>
            <person name="Qiang B."/>
            <person name="Wen Y."/>
            <person name="Hou Y."/>
            <person name="Yu J."/>
        </authorList>
    </citation>
    <scope>NUCLEOTIDE SEQUENCE [LARGE SCALE GENOMIC DNA]</scope>
    <source>
        <strain>301 / Serotype 2a</strain>
    </source>
</reference>
<reference key="3">
    <citation type="journal article" date="2003" name="Infect. Immun.">
        <title>Complete genome sequence and comparative genomics of Shigella flexneri serotype 2a strain 2457T.</title>
        <authorList>
            <person name="Wei J."/>
            <person name="Goldberg M.B."/>
            <person name="Burland V."/>
            <person name="Venkatesan M.M."/>
            <person name="Deng W."/>
            <person name="Fournier G."/>
            <person name="Mayhew G.F."/>
            <person name="Plunkett G. III"/>
            <person name="Rose D.J."/>
            <person name="Darling A."/>
            <person name="Mau B."/>
            <person name="Perna N.T."/>
            <person name="Payne S.M."/>
            <person name="Runyen-Janecky L.J."/>
            <person name="Zhou S."/>
            <person name="Schwartz D.C."/>
            <person name="Blattner F.R."/>
        </authorList>
    </citation>
    <scope>NUCLEOTIDE SEQUENCE [LARGE SCALE GENOMIC DNA]</scope>
    <source>
        <strain>ATCC 700930 / 2457T / Serotype 2a</strain>
    </source>
</reference>
<name>RFBJ_SHIFL</name>
<evidence type="ECO:0000305" key="1"/>
<sequence length="129" mass="14331">MYHSFNIAVIIPCYNEQKAIAKVINDFKTNIPTASIYVFDNNSTDSTAQVAEDAGATVHSVPLKGKGNVVRRMFSDVDADIYLMVDGDDTYDASSAPEMINHLIKNQLDMVVGCRQENGDQNTYRKGHR</sequence>
<protein>
    <recommendedName>
        <fullName>Protein RfbJ</fullName>
    </recommendedName>
</protein>
<dbReference type="EMBL" id="X71970">
    <property type="protein sequence ID" value="CAA50776.1"/>
    <property type="status" value="ALT_FRAME"/>
    <property type="molecule type" value="Genomic_DNA"/>
</dbReference>
<dbReference type="EMBL" id="AE005674">
    <property type="protein sequence ID" value="AAN43634.1"/>
    <property type="molecule type" value="Genomic_DNA"/>
</dbReference>
<dbReference type="EMBL" id="AE014073">
    <property type="protein sequence ID" value="AAP17463.1"/>
    <property type="molecule type" value="Genomic_DNA"/>
</dbReference>
<dbReference type="PIR" id="E36966">
    <property type="entry name" value="E36966"/>
</dbReference>
<dbReference type="SMR" id="P37786"/>
<dbReference type="STRING" id="198214.SF2095"/>
<dbReference type="PaxDb" id="198214-SF2095"/>
<dbReference type="KEGG" id="sfx:S2217"/>
<dbReference type="PATRIC" id="fig|623.156.peg.3794"/>
<dbReference type="HOGENOM" id="CLU_1931992_0_0_6"/>
<dbReference type="UniPathway" id="UPA00030"/>
<dbReference type="Proteomes" id="UP000001006">
    <property type="component" value="Chromosome"/>
</dbReference>
<dbReference type="Proteomes" id="UP000002673">
    <property type="component" value="Chromosome"/>
</dbReference>
<dbReference type="GO" id="GO:0016757">
    <property type="term" value="F:glycosyltransferase activity"/>
    <property type="evidence" value="ECO:0007669"/>
    <property type="project" value="UniProtKB-KW"/>
</dbReference>
<dbReference type="GO" id="GO:0009103">
    <property type="term" value="P:lipopolysaccharide biosynthetic process"/>
    <property type="evidence" value="ECO:0007669"/>
    <property type="project" value="UniProtKB-UniPathway"/>
</dbReference>
<dbReference type="CDD" id="cd04179">
    <property type="entry name" value="DPM_DPG-synthase_like"/>
    <property type="match status" value="1"/>
</dbReference>
<dbReference type="Gene3D" id="3.90.550.10">
    <property type="entry name" value="Spore Coat Polysaccharide Biosynthesis Protein SpsA, Chain A"/>
    <property type="match status" value="1"/>
</dbReference>
<dbReference type="InterPro" id="IPR001173">
    <property type="entry name" value="Glyco_trans_2-like"/>
</dbReference>
<dbReference type="InterPro" id="IPR050256">
    <property type="entry name" value="Glycosyltransferase_2"/>
</dbReference>
<dbReference type="InterPro" id="IPR029044">
    <property type="entry name" value="Nucleotide-diphossugar_trans"/>
</dbReference>
<dbReference type="PANTHER" id="PTHR48090:SF7">
    <property type="entry name" value="RFBJ PROTEIN"/>
    <property type="match status" value="1"/>
</dbReference>
<dbReference type="PANTHER" id="PTHR48090">
    <property type="entry name" value="UNDECAPRENYL-PHOSPHATE 4-DEOXY-4-FORMAMIDO-L-ARABINOSE TRANSFERASE-RELATED"/>
    <property type="match status" value="1"/>
</dbReference>
<dbReference type="Pfam" id="PF00535">
    <property type="entry name" value="Glycos_transf_2"/>
    <property type="match status" value="1"/>
</dbReference>
<dbReference type="SUPFAM" id="SSF53448">
    <property type="entry name" value="Nucleotide-diphospho-sugar transferases"/>
    <property type="match status" value="1"/>
</dbReference>
<feature type="chain" id="PRO_0000059216" description="Protein RfbJ">
    <location>
        <begin position="1"/>
        <end position="129"/>
    </location>
</feature>
<feature type="sequence conflict" description="In Ref. 1." evidence="1" ref="1">
    <original>F</original>
    <variation>S</variation>
    <location>
        <position position="74"/>
    </location>
</feature>
<feature type="sequence conflict" description="In Ref. 1." evidence="1" ref="1">
    <original>S</original>
    <variation>P</variation>
    <location>
        <position position="95"/>
    </location>
</feature>